<evidence type="ECO:0000255" key="1">
    <source>
        <dbReference type="HAMAP-Rule" id="MF_00365"/>
    </source>
</evidence>
<proteinExistence type="inferred from homology"/>
<organism>
    <name type="scientific">Cronobacter sakazakii (strain ATCC BAA-894)</name>
    <name type="common">Enterobacter sakazakii</name>
    <dbReference type="NCBI Taxonomy" id="290339"/>
    <lineage>
        <taxon>Bacteria</taxon>
        <taxon>Pseudomonadati</taxon>
        <taxon>Pseudomonadota</taxon>
        <taxon>Gammaproteobacteria</taxon>
        <taxon>Enterobacterales</taxon>
        <taxon>Enterobacteriaceae</taxon>
        <taxon>Cronobacter</taxon>
    </lineage>
</organism>
<sequence length="357" mass="40351">MSLTRLLIKDFRNIENADLALSPGFNFLVGANGSGKTSVLEAIYTLGHGRAFRSLQIGRVIRHEQDAFILHGRLQGDEREVSVGLTKDRNGDSTVRIDGSDGHKVAELAQLMPMQLITPEGFTLLGGGPKYRRAFLDWGCFHNEPGFFVAWSNLKRLLKQRNAALRQVTRYEQLRPWDRELVPLAEQISQWRASYSEAIANDMADTCAQFLPEFSLTFSFQRGWEKESDYADVLERGFERDRMLTYTAHGPHKADFRIRADGAPVEDTLSRGQLKLLMCALRLAQGEFLTRESGRRCLYLIDDFASELDDARRGLLAQRLKATQSQVFVSAISAEHILDMTDKNSKMFAVDQGKITD</sequence>
<gene>
    <name evidence="1" type="primary">recF</name>
    <name type="ordered locus">ESA_03974</name>
</gene>
<protein>
    <recommendedName>
        <fullName evidence="1">DNA replication and repair protein RecF</fullName>
    </recommendedName>
</protein>
<keyword id="KW-0067">ATP-binding</keyword>
<keyword id="KW-0963">Cytoplasm</keyword>
<keyword id="KW-0227">DNA damage</keyword>
<keyword id="KW-0234">DNA repair</keyword>
<keyword id="KW-0235">DNA replication</keyword>
<keyword id="KW-0238">DNA-binding</keyword>
<keyword id="KW-0547">Nucleotide-binding</keyword>
<keyword id="KW-1185">Reference proteome</keyword>
<keyword id="KW-0742">SOS response</keyword>
<dbReference type="EMBL" id="CP000783">
    <property type="protein sequence ID" value="ABU79160.1"/>
    <property type="molecule type" value="Genomic_DNA"/>
</dbReference>
<dbReference type="RefSeq" id="WP_004385999.1">
    <property type="nucleotide sequence ID" value="NC_009778.1"/>
</dbReference>
<dbReference type="SMR" id="A7MMZ8"/>
<dbReference type="GeneID" id="56732615"/>
<dbReference type="KEGG" id="esa:ESA_03974"/>
<dbReference type="HOGENOM" id="CLU_040267_0_0_6"/>
<dbReference type="Proteomes" id="UP000000260">
    <property type="component" value="Chromosome"/>
</dbReference>
<dbReference type="GO" id="GO:0005737">
    <property type="term" value="C:cytoplasm"/>
    <property type="evidence" value="ECO:0007669"/>
    <property type="project" value="UniProtKB-SubCell"/>
</dbReference>
<dbReference type="GO" id="GO:0005524">
    <property type="term" value="F:ATP binding"/>
    <property type="evidence" value="ECO:0007669"/>
    <property type="project" value="UniProtKB-UniRule"/>
</dbReference>
<dbReference type="GO" id="GO:0003697">
    <property type="term" value="F:single-stranded DNA binding"/>
    <property type="evidence" value="ECO:0007669"/>
    <property type="project" value="UniProtKB-UniRule"/>
</dbReference>
<dbReference type="GO" id="GO:0006260">
    <property type="term" value="P:DNA replication"/>
    <property type="evidence" value="ECO:0007669"/>
    <property type="project" value="UniProtKB-UniRule"/>
</dbReference>
<dbReference type="GO" id="GO:0000731">
    <property type="term" value="P:DNA synthesis involved in DNA repair"/>
    <property type="evidence" value="ECO:0007669"/>
    <property type="project" value="TreeGrafter"/>
</dbReference>
<dbReference type="GO" id="GO:0006302">
    <property type="term" value="P:double-strand break repair"/>
    <property type="evidence" value="ECO:0007669"/>
    <property type="project" value="TreeGrafter"/>
</dbReference>
<dbReference type="GO" id="GO:0009432">
    <property type="term" value="P:SOS response"/>
    <property type="evidence" value="ECO:0007669"/>
    <property type="project" value="UniProtKB-UniRule"/>
</dbReference>
<dbReference type="FunFam" id="1.20.1050.90:FF:000001">
    <property type="entry name" value="DNA replication and repair protein RecF"/>
    <property type="match status" value="1"/>
</dbReference>
<dbReference type="Gene3D" id="3.40.50.300">
    <property type="entry name" value="P-loop containing nucleotide triphosphate hydrolases"/>
    <property type="match status" value="1"/>
</dbReference>
<dbReference type="Gene3D" id="1.20.1050.90">
    <property type="entry name" value="RecF/RecN/SMC, N-terminal domain"/>
    <property type="match status" value="1"/>
</dbReference>
<dbReference type="HAMAP" id="MF_00365">
    <property type="entry name" value="RecF"/>
    <property type="match status" value="1"/>
</dbReference>
<dbReference type="InterPro" id="IPR001238">
    <property type="entry name" value="DNA-binding_RecF"/>
</dbReference>
<dbReference type="InterPro" id="IPR018078">
    <property type="entry name" value="DNA-binding_RecF_CS"/>
</dbReference>
<dbReference type="InterPro" id="IPR027417">
    <property type="entry name" value="P-loop_NTPase"/>
</dbReference>
<dbReference type="InterPro" id="IPR003395">
    <property type="entry name" value="RecF/RecN/SMC_N"/>
</dbReference>
<dbReference type="InterPro" id="IPR042174">
    <property type="entry name" value="RecF_2"/>
</dbReference>
<dbReference type="NCBIfam" id="TIGR00611">
    <property type="entry name" value="recf"/>
    <property type="match status" value="1"/>
</dbReference>
<dbReference type="PANTHER" id="PTHR32182">
    <property type="entry name" value="DNA REPLICATION AND REPAIR PROTEIN RECF"/>
    <property type="match status" value="1"/>
</dbReference>
<dbReference type="PANTHER" id="PTHR32182:SF0">
    <property type="entry name" value="DNA REPLICATION AND REPAIR PROTEIN RECF"/>
    <property type="match status" value="1"/>
</dbReference>
<dbReference type="Pfam" id="PF02463">
    <property type="entry name" value="SMC_N"/>
    <property type="match status" value="1"/>
</dbReference>
<dbReference type="SUPFAM" id="SSF52540">
    <property type="entry name" value="P-loop containing nucleoside triphosphate hydrolases"/>
    <property type="match status" value="1"/>
</dbReference>
<dbReference type="PROSITE" id="PS00617">
    <property type="entry name" value="RECF_1"/>
    <property type="match status" value="1"/>
</dbReference>
<dbReference type="PROSITE" id="PS00618">
    <property type="entry name" value="RECF_2"/>
    <property type="match status" value="1"/>
</dbReference>
<comment type="function">
    <text evidence="1">The RecF protein is involved in DNA metabolism; it is required for DNA replication and normal SOS inducibility. RecF binds preferentially to single-stranded, linear DNA. It also seems to bind ATP.</text>
</comment>
<comment type="subcellular location">
    <subcellularLocation>
        <location evidence="1">Cytoplasm</location>
    </subcellularLocation>
</comment>
<comment type="similarity">
    <text evidence="1">Belongs to the RecF family.</text>
</comment>
<name>RECF_CROS8</name>
<accession>A7MMZ8</accession>
<reference key="1">
    <citation type="journal article" date="2010" name="PLoS ONE">
        <title>Genome sequence of Cronobacter sakazakii BAA-894 and comparative genomic hybridization analysis with other Cronobacter species.</title>
        <authorList>
            <person name="Kucerova E."/>
            <person name="Clifton S.W."/>
            <person name="Xia X.Q."/>
            <person name="Long F."/>
            <person name="Porwollik S."/>
            <person name="Fulton L."/>
            <person name="Fronick C."/>
            <person name="Minx P."/>
            <person name="Kyung K."/>
            <person name="Warren W."/>
            <person name="Fulton R."/>
            <person name="Feng D."/>
            <person name="Wollam A."/>
            <person name="Shah N."/>
            <person name="Bhonagiri V."/>
            <person name="Nash W.E."/>
            <person name="Hallsworth-Pepin K."/>
            <person name="Wilson R.K."/>
            <person name="McClelland M."/>
            <person name="Forsythe S.J."/>
        </authorList>
    </citation>
    <scope>NUCLEOTIDE SEQUENCE [LARGE SCALE GENOMIC DNA]</scope>
    <source>
        <strain>ATCC BAA-894</strain>
    </source>
</reference>
<feature type="chain" id="PRO_1000048524" description="DNA replication and repair protein RecF">
    <location>
        <begin position="1"/>
        <end position="357"/>
    </location>
</feature>
<feature type="binding site" evidence="1">
    <location>
        <begin position="30"/>
        <end position="37"/>
    </location>
    <ligand>
        <name>ATP</name>
        <dbReference type="ChEBI" id="CHEBI:30616"/>
    </ligand>
</feature>